<feature type="chain" id="PRO_0000352399" description="Putative uncharacterized protein DDB_G0281041">
    <location>
        <begin position="1"/>
        <end position="53"/>
    </location>
</feature>
<feature type="region of interest" description="Disordered" evidence="1">
    <location>
        <begin position="14"/>
        <end position="53"/>
    </location>
</feature>
<feature type="compositionally biased region" description="Low complexity" evidence="1">
    <location>
        <begin position="14"/>
        <end position="33"/>
    </location>
</feature>
<sequence>MIFNSLINIINKSSPSSLNNNNNINSKSLQINSENKSKIQNNNPLGNKGGVQF</sequence>
<evidence type="ECO:0000256" key="1">
    <source>
        <dbReference type="SAM" id="MobiDB-lite"/>
    </source>
</evidence>
<proteinExistence type="predicted"/>
<organism>
    <name type="scientific">Dictyostelium discoideum</name>
    <name type="common">Social amoeba</name>
    <dbReference type="NCBI Taxonomy" id="44689"/>
    <lineage>
        <taxon>Eukaryota</taxon>
        <taxon>Amoebozoa</taxon>
        <taxon>Evosea</taxon>
        <taxon>Eumycetozoa</taxon>
        <taxon>Dictyostelia</taxon>
        <taxon>Dictyosteliales</taxon>
        <taxon>Dictyosteliaceae</taxon>
        <taxon>Dictyostelium</taxon>
    </lineage>
</organism>
<accession>Q54UJ5</accession>
<reference key="1">
    <citation type="journal article" date="2005" name="Nature">
        <title>The genome of the social amoeba Dictyostelium discoideum.</title>
        <authorList>
            <person name="Eichinger L."/>
            <person name="Pachebat J.A."/>
            <person name="Gloeckner G."/>
            <person name="Rajandream M.A."/>
            <person name="Sucgang R."/>
            <person name="Berriman M."/>
            <person name="Song J."/>
            <person name="Olsen R."/>
            <person name="Szafranski K."/>
            <person name="Xu Q."/>
            <person name="Tunggal B."/>
            <person name="Kummerfeld S."/>
            <person name="Madera M."/>
            <person name="Konfortov B.A."/>
            <person name="Rivero F."/>
            <person name="Bankier A.T."/>
            <person name="Lehmann R."/>
            <person name="Hamlin N."/>
            <person name="Davies R."/>
            <person name="Gaudet P."/>
            <person name="Fey P."/>
            <person name="Pilcher K."/>
            <person name="Chen G."/>
            <person name="Saunders D."/>
            <person name="Sodergren E.J."/>
            <person name="Davis P."/>
            <person name="Kerhornou A."/>
            <person name="Nie X."/>
            <person name="Hall N."/>
            <person name="Anjard C."/>
            <person name="Hemphill L."/>
            <person name="Bason N."/>
            <person name="Farbrother P."/>
            <person name="Desany B."/>
            <person name="Just E."/>
            <person name="Morio T."/>
            <person name="Rost R."/>
            <person name="Churcher C.M."/>
            <person name="Cooper J."/>
            <person name="Haydock S."/>
            <person name="van Driessche N."/>
            <person name="Cronin A."/>
            <person name="Goodhead I."/>
            <person name="Muzny D.M."/>
            <person name="Mourier T."/>
            <person name="Pain A."/>
            <person name="Lu M."/>
            <person name="Harper D."/>
            <person name="Lindsay R."/>
            <person name="Hauser H."/>
            <person name="James K.D."/>
            <person name="Quiles M."/>
            <person name="Madan Babu M."/>
            <person name="Saito T."/>
            <person name="Buchrieser C."/>
            <person name="Wardroper A."/>
            <person name="Felder M."/>
            <person name="Thangavelu M."/>
            <person name="Johnson D."/>
            <person name="Knights A."/>
            <person name="Loulseged H."/>
            <person name="Mungall K.L."/>
            <person name="Oliver K."/>
            <person name="Price C."/>
            <person name="Quail M.A."/>
            <person name="Urushihara H."/>
            <person name="Hernandez J."/>
            <person name="Rabbinowitsch E."/>
            <person name="Steffen D."/>
            <person name="Sanders M."/>
            <person name="Ma J."/>
            <person name="Kohara Y."/>
            <person name="Sharp S."/>
            <person name="Simmonds M.N."/>
            <person name="Spiegler S."/>
            <person name="Tivey A."/>
            <person name="Sugano S."/>
            <person name="White B."/>
            <person name="Walker D."/>
            <person name="Woodward J.R."/>
            <person name="Winckler T."/>
            <person name="Tanaka Y."/>
            <person name="Shaulsky G."/>
            <person name="Schleicher M."/>
            <person name="Weinstock G.M."/>
            <person name="Rosenthal A."/>
            <person name="Cox E.C."/>
            <person name="Chisholm R.L."/>
            <person name="Gibbs R.A."/>
            <person name="Loomis W.F."/>
            <person name="Platzer M."/>
            <person name="Kay R.R."/>
            <person name="Williams J.G."/>
            <person name="Dear P.H."/>
            <person name="Noegel A.A."/>
            <person name="Barrell B.G."/>
            <person name="Kuspa A."/>
        </authorList>
    </citation>
    <scope>NUCLEOTIDE SEQUENCE [LARGE SCALE GENOMIC DNA]</scope>
    <source>
        <strain>AX4</strain>
    </source>
</reference>
<dbReference type="EMBL" id="AAFI02000040">
    <property type="protein sequence ID" value="EAL66817.1"/>
    <property type="molecule type" value="Genomic_DNA"/>
</dbReference>
<dbReference type="RefSeq" id="XP_640781.1">
    <property type="nucleotide sequence ID" value="XM_635689.1"/>
</dbReference>
<dbReference type="PaxDb" id="44689-DDB0203969"/>
<dbReference type="EnsemblProtists" id="EAL66817">
    <property type="protein sequence ID" value="EAL66817"/>
    <property type="gene ID" value="DDB_G0281041"/>
</dbReference>
<dbReference type="GeneID" id="8622834"/>
<dbReference type="KEGG" id="ddi:DDB_G0281041"/>
<dbReference type="dictyBase" id="DDB_G0281041"/>
<dbReference type="HOGENOM" id="CLU_210587_0_0_1"/>
<dbReference type="InParanoid" id="Q54UJ5"/>
<dbReference type="PRO" id="PR:Q54UJ5"/>
<dbReference type="Proteomes" id="UP000002195">
    <property type="component" value="Chromosome 3"/>
</dbReference>
<gene>
    <name type="ORF">DDB_G0281041</name>
</gene>
<protein>
    <recommendedName>
        <fullName>Putative uncharacterized protein DDB_G0281041</fullName>
    </recommendedName>
</protein>
<name>Y3969_DICDI</name>
<keyword id="KW-1185">Reference proteome</keyword>